<organism>
    <name type="scientific">Agrostis stolonifera</name>
    <name type="common">Creeping bentgrass</name>
    <dbReference type="NCBI Taxonomy" id="63632"/>
    <lineage>
        <taxon>Eukaryota</taxon>
        <taxon>Viridiplantae</taxon>
        <taxon>Streptophyta</taxon>
        <taxon>Embryophyta</taxon>
        <taxon>Tracheophyta</taxon>
        <taxon>Spermatophyta</taxon>
        <taxon>Magnoliopsida</taxon>
        <taxon>Liliopsida</taxon>
        <taxon>Poales</taxon>
        <taxon>Poaceae</taxon>
        <taxon>BOP clade</taxon>
        <taxon>Pooideae</taxon>
        <taxon>Poodae</taxon>
        <taxon>Poeae</taxon>
        <taxon>Poeae Chloroplast Group 1 (Aveneae type)</taxon>
        <taxon>Agrostidodinae</taxon>
        <taxon>Agrostidinae</taxon>
        <taxon>Agrostis</taxon>
    </lineage>
</organism>
<evidence type="ECO:0000255" key="1">
    <source>
        <dbReference type="HAMAP-Rule" id="MF_01324"/>
    </source>
</evidence>
<evidence type="ECO:0000256" key="2">
    <source>
        <dbReference type="SAM" id="MobiDB-lite"/>
    </source>
</evidence>
<sequence length="1466" mass="168036">MAERANLVFHNKEIDGTGMKRLISRLIDHFGMGYTSHILDQLKTLGFHQATTTSISLGIEDLLTIPSKGWLVQDAEQQSFLLEKHYYYGAIHAVEKLRQSVEIWYATSEYLKQEMNSNFRITDPSNPVYLMSFSGARGNASQVHQLVGMRGLMADPQGQMIDLPIQSNLREGLSLTEYIISCYGARKGVVDTAVRTADAGYLTRRLVEVVQHILVRRRDCGTIQGISVSPQNGMTEKLFAQTLIGRVLADDIYIGSRCIAARNQDIGIGLVNRFITAFRAQPFRAQPIYIRTPFTCRSTSWICQLCYGRSPTHSDLVELGEAVGIIAGQSIGEPGTQLTLRTFHTGGVFTGGTADLVRSPSNGKIQFTENLVHPTRTRHGQPAFLCYIDLHVTIQSQDILYSVSIPSKSLILVQNDQYVKSEQVIAEIRSGTSTLHFKERVQKHIYSESDGEMHWSTDVYHAPEYQYGNLRRLPKTSHLWILSGNICRSSIASFSLHKDQDQMNTYGKKDREIFDYSRSDRIMANGHWNLIYPSIFQDNSDLLAKKRRNRFVIPLQYHQEQEKELISCLGISIEIPFMGVLRRNTIFAYFDDPRYRKDKKGSGIVKFRYRTLEEEYRTREEDLEDEYETLEDEYRTREDEYEYETLEDEYGSPENEYRTLEKDSEDEYGSPESKYRTREGEYGTLEEDSEDGYGNPGESSEDKYGTLEEDLEEDSEDEYDSSEEDSILKKEGLIEHRGTKEFSLKYQKEVDRFFFILQELHILPRSSSLKVLDNSIIGVNTQLTKNTRSRLGGLVRVKRKKSHTELKIFSGDIHFPEEADKVLGGCLIPPERKKKDSKESKKRKNWVYVQRKKILKSKEKYFVFVRPAVAYEMDEGRNLATLFPKDLLQEEENLQLRIVNFISHENSKLTQRIYHTNSQFVRTCLVVNWEQEEKEKAGASLVEVRANNLIRDFLRIELVKSTISYTRKRYDRTSAGPIPHNRLDHTNTNSFYSKAKIESLSQHQEATGTLLNRNKEYQPLMILSASNCSRIGLFKNSKHPNAIKELNPRIPIQEIFGPLGVIVPSTSNFSSSYYLLTHNQSLLKKYLFLANLKQTFQVLQGLKYSLIDENKRVSNFDSNIMLDPLLLNCHFVHHDSWEETLAIIHLGQFICENVCLFKSHIKKSGQIFIVNMDSFVIRAAKPYLATTGATVNGHYGEILYKGDRLVTFIYEKSRSSDITQGLPKVEQIFEARSIDSLSPNLERRIEDWNERIPRILGVPWGFLIGAELTIAQSRISLVNKIQKVYRSQGVQIHNRHIEIIIRQVTSKVRVSEDGMSNVFSPGELIGLLRAERAGRALDESIYYRAILLGITRASLNTQSFISEASFQETARVLAKAALRGRIDWLKGLKENVVLGGIIPVGTGFLKFVHRSPQDKNLYFEIQKQNLFASEMRDFLFLHTELVSSDSDVANNFYETSEPPFTPIYTI</sequence>
<proteinExistence type="inferred from homology"/>
<gene>
    <name evidence="1" type="primary">rpoC2</name>
</gene>
<accession>A1EA00</accession>
<reference key="1">
    <citation type="journal article" date="2007" name="Theor. Appl. Genet.">
        <title>Complete chloroplast genome sequences of Hordeum vulgare, Sorghum bicolor and Agrostis stolonifera, and comparative analyses with other grass genomes.</title>
        <authorList>
            <person name="Saski C."/>
            <person name="Lee S.-B."/>
            <person name="Fjellheim S."/>
            <person name="Guda C."/>
            <person name="Jansen R.K."/>
            <person name="Luo H."/>
            <person name="Tomkins J."/>
            <person name="Rognli O.A."/>
            <person name="Daniell H."/>
            <person name="Clarke J.L."/>
        </authorList>
    </citation>
    <scope>NUCLEOTIDE SEQUENCE [LARGE SCALE GENOMIC DNA]</scope>
    <source>
        <strain>cv. Penn A-4</strain>
    </source>
</reference>
<protein>
    <recommendedName>
        <fullName evidence="1">DNA-directed RNA polymerase subunit beta''</fullName>
        <ecNumber evidence="1">2.7.7.6</ecNumber>
    </recommendedName>
    <alternativeName>
        <fullName evidence="1">PEP</fullName>
    </alternativeName>
    <alternativeName>
        <fullName evidence="1">Plastid-encoded RNA polymerase subunit beta''</fullName>
        <shortName evidence="1">RNA polymerase subunit beta''</shortName>
    </alternativeName>
</protein>
<keyword id="KW-0150">Chloroplast</keyword>
<keyword id="KW-0240">DNA-directed RNA polymerase</keyword>
<keyword id="KW-0479">Metal-binding</keyword>
<keyword id="KW-0548">Nucleotidyltransferase</keyword>
<keyword id="KW-0934">Plastid</keyword>
<keyword id="KW-0804">Transcription</keyword>
<keyword id="KW-0808">Transferase</keyword>
<keyword id="KW-0862">Zinc</keyword>
<comment type="function">
    <text evidence="1">DNA-dependent RNA polymerase catalyzes the transcription of DNA into RNA using the four ribonucleoside triphosphates as substrates.</text>
</comment>
<comment type="catalytic activity">
    <reaction evidence="1">
        <text>RNA(n) + a ribonucleoside 5'-triphosphate = RNA(n+1) + diphosphate</text>
        <dbReference type="Rhea" id="RHEA:21248"/>
        <dbReference type="Rhea" id="RHEA-COMP:14527"/>
        <dbReference type="Rhea" id="RHEA-COMP:17342"/>
        <dbReference type="ChEBI" id="CHEBI:33019"/>
        <dbReference type="ChEBI" id="CHEBI:61557"/>
        <dbReference type="ChEBI" id="CHEBI:140395"/>
        <dbReference type="EC" id="2.7.7.6"/>
    </reaction>
</comment>
<comment type="cofactor">
    <cofactor evidence="1">
        <name>Zn(2+)</name>
        <dbReference type="ChEBI" id="CHEBI:29105"/>
    </cofactor>
    <text evidence="1">Binds 1 Zn(2+) ion per subunit.</text>
</comment>
<comment type="subunit">
    <text evidence="1">In plastids the minimal PEP RNA polymerase catalytic core is composed of four subunits: alpha, beta, beta', and beta''. When a (nuclear-encoded) sigma factor is associated with the core the holoenzyme is formed, which can initiate transcription.</text>
</comment>
<comment type="subcellular location">
    <subcellularLocation>
        <location evidence="1">Plastid</location>
        <location evidence="1">Chloroplast</location>
    </subcellularLocation>
</comment>
<comment type="similarity">
    <text evidence="1">Belongs to the RNA polymerase beta' chain family. RpoC2 subfamily.</text>
</comment>
<dbReference type="EC" id="2.7.7.6" evidence="1"/>
<dbReference type="EMBL" id="EF115543">
    <property type="protein sequence ID" value="ABK79572.1"/>
    <property type="molecule type" value="Genomic_DNA"/>
</dbReference>
<dbReference type="RefSeq" id="YP_874728.1">
    <property type="nucleotide sequence ID" value="NC_008591.1"/>
</dbReference>
<dbReference type="SMR" id="A1EA00"/>
<dbReference type="GeneID" id="4524922"/>
<dbReference type="GO" id="GO:0009507">
    <property type="term" value="C:chloroplast"/>
    <property type="evidence" value="ECO:0007669"/>
    <property type="project" value="UniProtKB-SubCell"/>
</dbReference>
<dbReference type="GO" id="GO:0000428">
    <property type="term" value="C:DNA-directed RNA polymerase complex"/>
    <property type="evidence" value="ECO:0007669"/>
    <property type="project" value="UniProtKB-KW"/>
</dbReference>
<dbReference type="GO" id="GO:0005739">
    <property type="term" value="C:mitochondrion"/>
    <property type="evidence" value="ECO:0007669"/>
    <property type="project" value="GOC"/>
</dbReference>
<dbReference type="GO" id="GO:0003677">
    <property type="term" value="F:DNA binding"/>
    <property type="evidence" value="ECO:0007669"/>
    <property type="project" value="UniProtKB-UniRule"/>
</dbReference>
<dbReference type="GO" id="GO:0003899">
    <property type="term" value="F:DNA-directed RNA polymerase activity"/>
    <property type="evidence" value="ECO:0007669"/>
    <property type="project" value="UniProtKB-UniRule"/>
</dbReference>
<dbReference type="GO" id="GO:0008270">
    <property type="term" value="F:zinc ion binding"/>
    <property type="evidence" value="ECO:0007669"/>
    <property type="project" value="UniProtKB-UniRule"/>
</dbReference>
<dbReference type="GO" id="GO:0006351">
    <property type="term" value="P:DNA-templated transcription"/>
    <property type="evidence" value="ECO:0007669"/>
    <property type="project" value="UniProtKB-UniRule"/>
</dbReference>
<dbReference type="CDD" id="cd02655">
    <property type="entry name" value="RNAP_beta'_C"/>
    <property type="match status" value="1"/>
</dbReference>
<dbReference type="FunFam" id="1.10.132.30:FF:000002">
    <property type="entry name" value="DNA-directed RNA polymerase subunit beta"/>
    <property type="match status" value="1"/>
</dbReference>
<dbReference type="Gene3D" id="1.10.132.30">
    <property type="match status" value="1"/>
</dbReference>
<dbReference type="Gene3D" id="1.10.150.390">
    <property type="match status" value="1"/>
</dbReference>
<dbReference type="Gene3D" id="1.10.1790.20">
    <property type="match status" value="1"/>
</dbReference>
<dbReference type="Gene3D" id="1.10.274.100">
    <property type="entry name" value="RNA polymerase Rpb1, domain 3"/>
    <property type="match status" value="1"/>
</dbReference>
<dbReference type="HAMAP" id="MF_01324">
    <property type="entry name" value="RNApol_bact_RpoC2"/>
    <property type="match status" value="1"/>
</dbReference>
<dbReference type="InterPro" id="IPR012756">
    <property type="entry name" value="DNA-dir_RpoC2_beta_pp"/>
</dbReference>
<dbReference type="InterPro" id="IPR050254">
    <property type="entry name" value="RNA_pol_beta''_euk"/>
</dbReference>
<dbReference type="InterPro" id="IPR042102">
    <property type="entry name" value="RNA_pol_Rpb1_3_sf"/>
</dbReference>
<dbReference type="InterPro" id="IPR007083">
    <property type="entry name" value="RNA_pol_Rpb1_4"/>
</dbReference>
<dbReference type="InterPro" id="IPR007081">
    <property type="entry name" value="RNA_pol_Rpb1_5"/>
</dbReference>
<dbReference type="InterPro" id="IPR038120">
    <property type="entry name" value="Rpb1_funnel_sf"/>
</dbReference>
<dbReference type="NCBIfam" id="TIGR02388">
    <property type="entry name" value="rpoC2_cyan"/>
    <property type="match status" value="1"/>
</dbReference>
<dbReference type="PANTHER" id="PTHR34995">
    <property type="entry name" value="DNA-DIRECTED RNA POLYMERASE SUBUNIT BETA"/>
    <property type="match status" value="1"/>
</dbReference>
<dbReference type="PANTHER" id="PTHR34995:SF1">
    <property type="entry name" value="DNA-DIRECTED RNA POLYMERASE SUBUNIT BETA"/>
    <property type="match status" value="1"/>
</dbReference>
<dbReference type="Pfam" id="PF05000">
    <property type="entry name" value="RNA_pol_Rpb1_4"/>
    <property type="match status" value="1"/>
</dbReference>
<dbReference type="Pfam" id="PF04998">
    <property type="entry name" value="RNA_pol_Rpb1_5"/>
    <property type="match status" value="2"/>
</dbReference>
<dbReference type="SUPFAM" id="SSF64484">
    <property type="entry name" value="beta and beta-prime subunits of DNA dependent RNA-polymerase"/>
    <property type="match status" value="1"/>
</dbReference>
<name>RPOC2_AGRST</name>
<feature type="chain" id="PRO_0000277184" description="DNA-directed RNA polymerase subunit beta''">
    <location>
        <begin position="1"/>
        <end position="1466"/>
    </location>
</feature>
<feature type="region of interest" description="Disordered" evidence="2">
    <location>
        <begin position="618"/>
        <end position="725"/>
    </location>
</feature>
<feature type="compositionally biased region" description="Acidic residues" evidence="2">
    <location>
        <begin position="621"/>
        <end position="631"/>
    </location>
</feature>
<feature type="compositionally biased region" description="Acidic residues" evidence="2">
    <location>
        <begin position="639"/>
        <end position="651"/>
    </location>
</feature>
<feature type="compositionally biased region" description="Acidic residues" evidence="2">
    <location>
        <begin position="707"/>
        <end position="725"/>
    </location>
</feature>
<feature type="binding site" evidence="1">
    <location>
        <position position="220"/>
    </location>
    <ligand>
        <name>Zn(2+)</name>
        <dbReference type="ChEBI" id="CHEBI:29105"/>
    </ligand>
</feature>
<feature type="binding site" evidence="1">
    <location>
        <position position="296"/>
    </location>
    <ligand>
        <name>Zn(2+)</name>
        <dbReference type="ChEBI" id="CHEBI:29105"/>
    </ligand>
</feature>
<feature type="binding site" evidence="1">
    <location>
        <position position="303"/>
    </location>
    <ligand>
        <name>Zn(2+)</name>
        <dbReference type="ChEBI" id="CHEBI:29105"/>
    </ligand>
</feature>
<feature type="binding site" evidence="1">
    <location>
        <position position="306"/>
    </location>
    <ligand>
        <name>Zn(2+)</name>
        <dbReference type="ChEBI" id="CHEBI:29105"/>
    </ligand>
</feature>
<geneLocation type="chloroplast"/>